<dbReference type="EC" id="2.1.1.199" evidence="1"/>
<dbReference type="EMBL" id="CP000557">
    <property type="protein sequence ID" value="ABO66354.1"/>
    <property type="molecule type" value="Genomic_DNA"/>
</dbReference>
<dbReference type="RefSeq" id="WP_008878696.1">
    <property type="nucleotide sequence ID" value="NC_009328.1"/>
</dbReference>
<dbReference type="SMR" id="A4IM00"/>
<dbReference type="KEGG" id="gtn:GTNG_0976"/>
<dbReference type="eggNOG" id="COG0275">
    <property type="taxonomic scope" value="Bacteria"/>
</dbReference>
<dbReference type="HOGENOM" id="CLU_038422_2_0_9"/>
<dbReference type="Proteomes" id="UP000001578">
    <property type="component" value="Chromosome"/>
</dbReference>
<dbReference type="GO" id="GO:0005737">
    <property type="term" value="C:cytoplasm"/>
    <property type="evidence" value="ECO:0007669"/>
    <property type="project" value="UniProtKB-SubCell"/>
</dbReference>
<dbReference type="GO" id="GO:0071424">
    <property type="term" value="F:rRNA (cytosine-N4-)-methyltransferase activity"/>
    <property type="evidence" value="ECO:0007669"/>
    <property type="project" value="UniProtKB-UniRule"/>
</dbReference>
<dbReference type="GO" id="GO:0070475">
    <property type="term" value="P:rRNA base methylation"/>
    <property type="evidence" value="ECO:0007669"/>
    <property type="project" value="UniProtKB-UniRule"/>
</dbReference>
<dbReference type="FunFam" id="1.10.150.170:FF:000001">
    <property type="entry name" value="Ribosomal RNA small subunit methyltransferase H"/>
    <property type="match status" value="1"/>
</dbReference>
<dbReference type="Gene3D" id="1.10.150.170">
    <property type="entry name" value="Putative methyltransferase TM0872, insert domain"/>
    <property type="match status" value="1"/>
</dbReference>
<dbReference type="Gene3D" id="3.40.50.150">
    <property type="entry name" value="Vaccinia Virus protein VP39"/>
    <property type="match status" value="1"/>
</dbReference>
<dbReference type="HAMAP" id="MF_01007">
    <property type="entry name" value="16SrRNA_methyltr_H"/>
    <property type="match status" value="1"/>
</dbReference>
<dbReference type="InterPro" id="IPR002903">
    <property type="entry name" value="RsmH"/>
</dbReference>
<dbReference type="InterPro" id="IPR023397">
    <property type="entry name" value="SAM-dep_MeTrfase_MraW_recog"/>
</dbReference>
<dbReference type="InterPro" id="IPR029063">
    <property type="entry name" value="SAM-dependent_MTases_sf"/>
</dbReference>
<dbReference type="NCBIfam" id="TIGR00006">
    <property type="entry name" value="16S rRNA (cytosine(1402)-N(4))-methyltransferase RsmH"/>
    <property type="match status" value="1"/>
</dbReference>
<dbReference type="PANTHER" id="PTHR11265:SF0">
    <property type="entry name" value="12S RRNA N4-METHYLCYTIDINE METHYLTRANSFERASE"/>
    <property type="match status" value="1"/>
</dbReference>
<dbReference type="PANTHER" id="PTHR11265">
    <property type="entry name" value="S-ADENOSYL-METHYLTRANSFERASE MRAW"/>
    <property type="match status" value="1"/>
</dbReference>
<dbReference type="Pfam" id="PF01795">
    <property type="entry name" value="Methyltransf_5"/>
    <property type="match status" value="1"/>
</dbReference>
<dbReference type="PIRSF" id="PIRSF004486">
    <property type="entry name" value="MraW"/>
    <property type="match status" value="1"/>
</dbReference>
<dbReference type="SUPFAM" id="SSF81799">
    <property type="entry name" value="Putative methyltransferase TM0872, insert domain"/>
    <property type="match status" value="1"/>
</dbReference>
<dbReference type="SUPFAM" id="SSF53335">
    <property type="entry name" value="S-adenosyl-L-methionine-dependent methyltransferases"/>
    <property type="match status" value="1"/>
</dbReference>
<accession>A4IM00</accession>
<feature type="chain" id="PRO_0000386908" description="Ribosomal RNA small subunit methyltransferase H">
    <location>
        <begin position="1"/>
        <end position="310"/>
    </location>
</feature>
<feature type="binding site" evidence="1">
    <location>
        <begin position="32"/>
        <end position="34"/>
    </location>
    <ligand>
        <name>S-adenosyl-L-methionine</name>
        <dbReference type="ChEBI" id="CHEBI:59789"/>
    </ligand>
</feature>
<feature type="binding site" evidence="1">
    <location>
        <position position="52"/>
    </location>
    <ligand>
        <name>S-adenosyl-L-methionine</name>
        <dbReference type="ChEBI" id="CHEBI:59789"/>
    </ligand>
</feature>
<feature type="binding site" evidence="1">
    <location>
        <position position="79"/>
    </location>
    <ligand>
        <name>S-adenosyl-L-methionine</name>
        <dbReference type="ChEBI" id="CHEBI:59789"/>
    </ligand>
</feature>
<feature type="binding site" evidence="1">
    <location>
        <position position="100"/>
    </location>
    <ligand>
        <name>S-adenosyl-L-methionine</name>
        <dbReference type="ChEBI" id="CHEBI:59789"/>
    </ligand>
</feature>
<feature type="binding site" evidence="1">
    <location>
        <position position="107"/>
    </location>
    <ligand>
        <name>S-adenosyl-L-methionine</name>
        <dbReference type="ChEBI" id="CHEBI:59789"/>
    </ligand>
</feature>
<protein>
    <recommendedName>
        <fullName evidence="1">Ribosomal RNA small subunit methyltransferase H</fullName>
        <ecNumber evidence="1">2.1.1.199</ecNumber>
    </recommendedName>
    <alternativeName>
        <fullName evidence="1">16S rRNA m(4)C1402 methyltransferase</fullName>
    </alternativeName>
    <alternativeName>
        <fullName evidence="1">rRNA (cytosine-N(4)-)-methyltransferase RsmH</fullName>
    </alternativeName>
</protein>
<evidence type="ECO:0000255" key="1">
    <source>
        <dbReference type="HAMAP-Rule" id="MF_01007"/>
    </source>
</evidence>
<keyword id="KW-0963">Cytoplasm</keyword>
<keyword id="KW-0489">Methyltransferase</keyword>
<keyword id="KW-0698">rRNA processing</keyword>
<keyword id="KW-0949">S-adenosyl-L-methionine</keyword>
<keyword id="KW-0808">Transferase</keyword>
<reference key="1">
    <citation type="journal article" date="2007" name="Proc. Natl. Acad. Sci. U.S.A.">
        <title>Genome and proteome of long-chain alkane degrading Geobacillus thermodenitrificans NG80-2 isolated from a deep-subsurface oil reservoir.</title>
        <authorList>
            <person name="Feng L."/>
            <person name="Wang W."/>
            <person name="Cheng J."/>
            <person name="Ren Y."/>
            <person name="Zhao G."/>
            <person name="Gao C."/>
            <person name="Tang Y."/>
            <person name="Liu X."/>
            <person name="Han W."/>
            <person name="Peng X."/>
            <person name="Liu R."/>
            <person name="Wang L."/>
        </authorList>
    </citation>
    <scope>NUCLEOTIDE SEQUENCE [LARGE SCALE GENOMIC DNA]</scope>
    <source>
        <strain>NG80-2</strain>
    </source>
</reference>
<organism>
    <name type="scientific">Geobacillus thermodenitrificans (strain NG80-2)</name>
    <dbReference type="NCBI Taxonomy" id="420246"/>
    <lineage>
        <taxon>Bacteria</taxon>
        <taxon>Bacillati</taxon>
        <taxon>Bacillota</taxon>
        <taxon>Bacilli</taxon>
        <taxon>Bacillales</taxon>
        <taxon>Anoxybacillaceae</taxon>
        <taxon>Geobacillus</taxon>
    </lineage>
</organism>
<proteinExistence type="inferred from homology"/>
<comment type="function">
    <text evidence="1">Specifically methylates the N4 position of cytidine in position 1402 (C1402) of 16S rRNA.</text>
</comment>
<comment type="catalytic activity">
    <reaction evidence="1">
        <text>cytidine(1402) in 16S rRNA + S-adenosyl-L-methionine = N(4)-methylcytidine(1402) in 16S rRNA + S-adenosyl-L-homocysteine + H(+)</text>
        <dbReference type="Rhea" id="RHEA:42928"/>
        <dbReference type="Rhea" id="RHEA-COMP:10286"/>
        <dbReference type="Rhea" id="RHEA-COMP:10287"/>
        <dbReference type="ChEBI" id="CHEBI:15378"/>
        <dbReference type="ChEBI" id="CHEBI:57856"/>
        <dbReference type="ChEBI" id="CHEBI:59789"/>
        <dbReference type="ChEBI" id="CHEBI:74506"/>
        <dbReference type="ChEBI" id="CHEBI:82748"/>
        <dbReference type="EC" id="2.1.1.199"/>
    </reaction>
</comment>
<comment type="subcellular location">
    <subcellularLocation>
        <location evidence="1">Cytoplasm</location>
    </subcellularLocation>
</comment>
<comment type="similarity">
    <text evidence="1">Belongs to the methyltransferase superfamily. RsmH family.</text>
</comment>
<sequence length="310" mass="35263">MFQHTTVLLKEAVDGLNVRPDGVYVDCTLGGGGHSEYLLSRLSKRGKLFAFDQDETAILHASERLARYREQVQFINRNFRFLQEELSALGIHAVDGILFDLGVSSPQLDEPERGFSYQHDAPLDMRMDRKQRLTAAEIVNRWPYEELVRIFFRYGEEKFSKQVARKIEEVRRKRPIETTGELVEVIKAAIPAPARRSGGHPAKRIFQALRIAVNDELEAFREALEQAIELLAPGGRVSVITFHSLEDRICKETFKKASESPPLPPGLPVLPDDYRPVLKIITKKPVVPSAEELERNNRARSAKLRIAEKQ</sequence>
<name>RSMH_GEOTN</name>
<gene>
    <name evidence="1" type="primary">rsmH</name>
    <name type="synonym">mraW</name>
    <name type="ordered locus">GTNG_0976</name>
</gene>